<sequence length="341" mass="37105">MQQLTIAIDAMGGDFGPQVTVPAVVQALSQFPELKVTVVGDRDAISTQLTHLNYTLNPRFSIVHSDSVIGNNTQPSKALRHSRGSSMRMALDLVASKDVDACISAGNTGALMGLSRFTLKLLPGVERPALISPLPTKNNQRTWMLDLGANVSCDAETLFQFAVMGSELAEQSIGRKAKVALLNIGEEEIKGNDQIKRCAEMLNQCQNIEFIGYIEGDKLYQGIADVVVCDGFVGNVCLKTSEGVAHLFLDQLKSQLLTSKFKQILAKWLFGDVISSLKGLNPDQYNGASLIGLRGIVVKSHGSADISAFNNAIKEAVHEIKRQIPNRISDRLEAVLLERHY</sequence>
<name>PLSX_ALISL</name>
<protein>
    <recommendedName>
        <fullName evidence="1">Phosphate acyltransferase</fullName>
        <ecNumber evidence="1">2.3.1.274</ecNumber>
    </recommendedName>
    <alternativeName>
        <fullName evidence="1">Acyl-ACP phosphotransacylase</fullName>
    </alternativeName>
    <alternativeName>
        <fullName evidence="1">Acyl-[acyl-carrier-protein]--phosphate acyltransferase</fullName>
    </alternativeName>
    <alternativeName>
        <fullName evidence="1">Phosphate-acyl-ACP acyltransferase</fullName>
    </alternativeName>
</protein>
<keyword id="KW-0963">Cytoplasm</keyword>
<keyword id="KW-0444">Lipid biosynthesis</keyword>
<keyword id="KW-0443">Lipid metabolism</keyword>
<keyword id="KW-0594">Phospholipid biosynthesis</keyword>
<keyword id="KW-1208">Phospholipid metabolism</keyword>
<keyword id="KW-0808">Transferase</keyword>
<accession>B6EIZ7</accession>
<reference key="1">
    <citation type="journal article" date="2008" name="BMC Genomics">
        <title>The genome sequence of the fish pathogen Aliivibrio salmonicida strain LFI1238 shows extensive evidence of gene decay.</title>
        <authorList>
            <person name="Hjerde E."/>
            <person name="Lorentzen M.S."/>
            <person name="Holden M.T."/>
            <person name="Seeger K."/>
            <person name="Paulsen S."/>
            <person name="Bason N."/>
            <person name="Churcher C."/>
            <person name="Harris D."/>
            <person name="Norbertczak H."/>
            <person name="Quail M.A."/>
            <person name="Sanders S."/>
            <person name="Thurston S."/>
            <person name="Parkhill J."/>
            <person name="Willassen N.P."/>
            <person name="Thomson N.R."/>
        </authorList>
    </citation>
    <scope>NUCLEOTIDE SEQUENCE [LARGE SCALE GENOMIC DNA]</scope>
    <source>
        <strain>LFI1238</strain>
    </source>
</reference>
<proteinExistence type="inferred from homology"/>
<gene>
    <name evidence="1" type="primary">plsX</name>
    <name type="ordered locus">VSAL_I2238</name>
</gene>
<feature type="chain" id="PRO_1000089876" description="Phosphate acyltransferase">
    <location>
        <begin position="1"/>
        <end position="341"/>
    </location>
</feature>
<evidence type="ECO:0000255" key="1">
    <source>
        <dbReference type="HAMAP-Rule" id="MF_00019"/>
    </source>
</evidence>
<dbReference type="EC" id="2.3.1.274" evidence="1"/>
<dbReference type="EMBL" id="FM178379">
    <property type="protein sequence ID" value="CAQ79922.1"/>
    <property type="molecule type" value="Genomic_DNA"/>
</dbReference>
<dbReference type="RefSeq" id="WP_012550752.1">
    <property type="nucleotide sequence ID" value="NC_011312.1"/>
</dbReference>
<dbReference type="SMR" id="B6EIZ7"/>
<dbReference type="KEGG" id="vsa:VSAL_I2238"/>
<dbReference type="eggNOG" id="COG0416">
    <property type="taxonomic scope" value="Bacteria"/>
</dbReference>
<dbReference type="HOGENOM" id="CLU_039379_1_0_6"/>
<dbReference type="UniPathway" id="UPA00085"/>
<dbReference type="Proteomes" id="UP000001730">
    <property type="component" value="Chromosome 1"/>
</dbReference>
<dbReference type="GO" id="GO:0005737">
    <property type="term" value="C:cytoplasm"/>
    <property type="evidence" value="ECO:0007669"/>
    <property type="project" value="UniProtKB-SubCell"/>
</dbReference>
<dbReference type="GO" id="GO:0043811">
    <property type="term" value="F:phosphate:acyl-[acyl carrier protein] acyltransferase activity"/>
    <property type="evidence" value="ECO:0007669"/>
    <property type="project" value="UniProtKB-UniRule"/>
</dbReference>
<dbReference type="GO" id="GO:0006633">
    <property type="term" value="P:fatty acid biosynthetic process"/>
    <property type="evidence" value="ECO:0007669"/>
    <property type="project" value="UniProtKB-UniRule"/>
</dbReference>
<dbReference type="GO" id="GO:0008654">
    <property type="term" value="P:phospholipid biosynthetic process"/>
    <property type="evidence" value="ECO:0007669"/>
    <property type="project" value="UniProtKB-KW"/>
</dbReference>
<dbReference type="Gene3D" id="3.40.718.10">
    <property type="entry name" value="Isopropylmalate Dehydrogenase"/>
    <property type="match status" value="1"/>
</dbReference>
<dbReference type="HAMAP" id="MF_00019">
    <property type="entry name" value="PlsX"/>
    <property type="match status" value="1"/>
</dbReference>
<dbReference type="InterPro" id="IPR003664">
    <property type="entry name" value="FA_synthesis"/>
</dbReference>
<dbReference type="InterPro" id="IPR012281">
    <property type="entry name" value="Phospholipid_synth_PlsX-like"/>
</dbReference>
<dbReference type="NCBIfam" id="TIGR00182">
    <property type="entry name" value="plsX"/>
    <property type="match status" value="1"/>
</dbReference>
<dbReference type="PANTHER" id="PTHR30100">
    <property type="entry name" value="FATTY ACID/PHOSPHOLIPID SYNTHESIS PROTEIN PLSX"/>
    <property type="match status" value="1"/>
</dbReference>
<dbReference type="PANTHER" id="PTHR30100:SF1">
    <property type="entry name" value="PHOSPHATE ACYLTRANSFERASE"/>
    <property type="match status" value="1"/>
</dbReference>
<dbReference type="Pfam" id="PF02504">
    <property type="entry name" value="FA_synthesis"/>
    <property type="match status" value="1"/>
</dbReference>
<dbReference type="PIRSF" id="PIRSF002465">
    <property type="entry name" value="Phsphlp_syn_PlsX"/>
    <property type="match status" value="1"/>
</dbReference>
<dbReference type="SUPFAM" id="SSF53659">
    <property type="entry name" value="Isocitrate/Isopropylmalate dehydrogenase-like"/>
    <property type="match status" value="1"/>
</dbReference>
<organism>
    <name type="scientific">Aliivibrio salmonicida (strain LFI1238)</name>
    <name type="common">Vibrio salmonicida (strain LFI1238)</name>
    <dbReference type="NCBI Taxonomy" id="316275"/>
    <lineage>
        <taxon>Bacteria</taxon>
        <taxon>Pseudomonadati</taxon>
        <taxon>Pseudomonadota</taxon>
        <taxon>Gammaproteobacteria</taxon>
        <taxon>Vibrionales</taxon>
        <taxon>Vibrionaceae</taxon>
        <taxon>Aliivibrio</taxon>
    </lineage>
</organism>
<comment type="function">
    <text evidence="1">Catalyzes the reversible formation of acyl-phosphate (acyl-PO(4)) from acyl-[acyl-carrier-protein] (acyl-ACP). This enzyme utilizes acyl-ACP as fatty acyl donor, but not acyl-CoA.</text>
</comment>
<comment type="catalytic activity">
    <reaction evidence="1">
        <text>a fatty acyl-[ACP] + phosphate = an acyl phosphate + holo-[ACP]</text>
        <dbReference type="Rhea" id="RHEA:42292"/>
        <dbReference type="Rhea" id="RHEA-COMP:9685"/>
        <dbReference type="Rhea" id="RHEA-COMP:14125"/>
        <dbReference type="ChEBI" id="CHEBI:43474"/>
        <dbReference type="ChEBI" id="CHEBI:59918"/>
        <dbReference type="ChEBI" id="CHEBI:64479"/>
        <dbReference type="ChEBI" id="CHEBI:138651"/>
        <dbReference type="EC" id="2.3.1.274"/>
    </reaction>
</comment>
<comment type="pathway">
    <text evidence="1">Lipid metabolism; phospholipid metabolism.</text>
</comment>
<comment type="subunit">
    <text evidence="1">Homodimer. Probably interacts with PlsY.</text>
</comment>
<comment type="subcellular location">
    <subcellularLocation>
        <location evidence="1">Cytoplasm</location>
    </subcellularLocation>
    <text evidence="1">Associated with the membrane possibly through PlsY.</text>
</comment>
<comment type="similarity">
    <text evidence="1">Belongs to the PlsX family.</text>
</comment>